<sequence>MKSSHIALICIVMFSLFALHESRMEGGAIHRSMLNITIPPCIKTFCKVLTFEKHCWCCFGPRAKKKLCWNEQKYPNAKELCYAGCIIE</sequence>
<evidence type="ECO:0000250" key="1"/>
<evidence type="ECO:0000255" key="2"/>
<evidence type="ECO:0000269" key="3">
    <source>
    </source>
</evidence>
<evidence type="ECO:0000305" key="4"/>
<proteinExistence type="evidence at transcript level"/>
<gene>
    <name type="primary">ESFL7</name>
    <name type="ordered locus">At2g16225</name>
    <name type="ORF">F7H1</name>
</gene>
<reference key="1">
    <citation type="journal article" date="1999" name="Nature">
        <title>Sequence and analysis of chromosome 2 of the plant Arabidopsis thaliana.</title>
        <authorList>
            <person name="Lin X."/>
            <person name="Kaul S."/>
            <person name="Rounsley S.D."/>
            <person name="Shea T.P."/>
            <person name="Benito M.-I."/>
            <person name="Town C.D."/>
            <person name="Fujii C.Y."/>
            <person name="Mason T.M."/>
            <person name="Bowman C.L."/>
            <person name="Barnstead M.E."/>
            <person name="Feldblyum T.V."/>
            <person name="Buell C.R."/>
            <person name="Ketchum K.A."/>
            <person name="Lee J.J."/>
            <person name="Ronning C.M."/>
            <person name="Koo H.L."/>
            <person name="Moffat K.S."/>
            <person name="Cronin L.A."/>
            <person name="Shen M."/>
            <person name="Pai G."/>
            <person name="Van Aken S."/>
            <person name="Umayam L."/>
            <person name="Tallon L.J."/>
            <person name="Gill J.E."/>
            <person name="Adams M.D."/>
            <person name="Carrera A.J."/>
            <person name="Creasy T.H."/>
            <person name="Goodman H.M."/>
            <person name="Somerville C.R."/>
            <person name="Copenhaver G.P."/>
            <person name="Preuss D."/>
            <person name="Nierman W.C."/>
            <person name="White O."/>
            <person name="Eisen J.A."/>
            <person name="Salzberg S.L."/>
            <person name="Fraser C.M."/>
            <person name="Venter J.C."/>
        </authorList>
    </citation>
    <scope>NUCLEOTIDE SEQUENCE [LARGE SCALE GENOMIC DNA]</scope>
    <source>
        <strain>cv. Columbia</strain>
    </source>
</reference>
<reference key="2">
    <citation type="journal article" date="2017" name="Plant J.">
        <title>Araport11: a complete reannotation of the Arabidopsis thaliana reference genome.</title>
        <authorList>
            <person name="Cheng C.Y."/>
            <person name="Krishnakumar V."/>
            <person name="Chan A.P."/>
            <person name="Thibaud-Nissen F."/>
            <person name="Schobel S."/>
            <person name="Town C.D."/>
        </authorList>
    </citation>
    <scope>GENOME REANNOTATION</scope>
    <source>
        <strain>cv. Columbia</strain>
    </source>
</reference>
<reference key="3">
    <citation type="journal article" date="2014" name="Science">
        <title>Central cell-derived peptides regulate early embryo patterning in flowering plants.</title>
        <authorList>
            <person name="Costa L.M."/>
            <person name="Marshall E."/>
            <person name="Tesfaye M."/>
            <person name="Silverstein K.A."/>
            <person name="Mori M."/>
            <person name="Umetsu Y."/>
            <person name="Otterbach S.L."/>
            <person name="Papareddy R."/>
            <person name="Dickinson H.G."/>
            <person name="Boutiller K."/>
            <person name="VandenBosch K.A."/>
            <person name="Ohki S."/>
            <person name="Gutierrez-Marcos J.F."/>
        </authorList>
    </citation>
    <scope>IDENTIFICATION</scope>
    <scope>TISSUE SPECIFICITY</scope>
</reference>
<keyword id="KW-1015">Disulfide bond</keyword>
<keyword id="KW-1185">Reference proteome</keyword>
<keyword id="KW-0732">Signal</keyword>
<name>ESFL7_ARATH</name>
<comment type="tissue specificity">
    <text evidence="3">Expressed in leaves and flowers.</text>
</comment>
<comment type="similarity">
    <text evidence="4">Belongs to the MEG family.</text>
</comment>
<dbReference type="EMBL" id="AC007134">
    <property type="status" value="NOT_ANNOTATED_CDS"/>
    <property type="molecule type" value="Genomic_DNA"/>
</dbReference>
<dbReference type="EMBL" id="CP002685">
    <property type="protein sequence ID" value="AEC06476.2"/>
    <property type="molecule type" value="Genomic_DNA"/>
</dbReference>
<dbReference type="RefSeq" id="NP_001077896.2">
    <property type="nucleotide sequence ID" value="NM_001084427.1"/>
</dbReference>
<dbReference type="SMR" id="A8MQP7"/>
<dbReference type="PaxDb" id="3702-AT2G16225.1"/>
<dbReference type="EnsemblPlants" id="AT2G16225.1">
    <property type="protein sequence ID" value="AT2G16225.1"/>
    <property type="gene ID" value="AT2G16225"/>
</dbReference>
<dbReference type="GeneID" id="5007877"/>
<dbReference type="Gramene" id="AT2G16225.1">
    <property type="protein sequence ID" value="AT2G16225.1"/>
    <property type="gene ID" value="AT2G16225"/>
</dbReference>
<dbReference type="KEGG" id="ath:AT2G16225"/>
<dbReference type="Araport" id="AT2G16225"/>
<dbReference type="TAIR" id="AT2G16225"/>
<dbReference type="HOGENOM" id="CLU_183999_1_0_1"/>
<dbReference type="InParanoid" id="A8MQP7"/>
<dbReference type="OMA" id="HRSMLNI"/>
<dbReference type="PRO" id="PR:A8MQP7"/>
<dbReference type="Proteomes" id="UP000006548">
    <property type="component" value="Chromosome 2"/>
</dbReference>
<dbReference type="ExpressionAtlas" id="A8MQP7">
    <property type="expression patterns" value="baseline"/>
</dbReference>
<dbReference type="GO" id="GO:0010098">
    <property type="term" value="P:suspensor development"/>
    <property type="evidence" value="ECO:0007669"/>
    <property type="project" value="InterPro"/>
</dbReference>
<dbReference type="InterPro" id="IPR041608">
    <property type="entry name" value="ESF1_brassicaceae"/>
</dbReference>
<dbReference type="Pfam" id="PF18209">
    <property type="entry name" value="ESF1"/>
    <property type="match status" value="1"/>
</dbReference>
<protein>
    <recommendedName>
        <fullName>EMBRYO SURROUNDING FACTOR 1-like protein 7</fullName>
    </recommendedName>
</protein>
<accession>A8MQP7</accession>
<organism>
    <name type="scientific">Arabidopsis thaliana</name>
    <name type="common">Mouse-ear cress</name>
    <dbReference type="NCBI Taxonomy" id="3702"/>
    <lineage>
        <taxon>Eukaryota</taxon>
        <taxon>Viridiplantae</taxon>
        <taxon>Streptophyta</taxon>
        <taxon>Embryophyta</taxon>
        <taxon>Tracheophyta</taxon>
        <taxon>Spermatophyta</taxon>
        <taxon>Magnoliopsida</taxon>
        <taxon>eudicotyledons</taxon>
        <taxon>Gunneridae</taxon>
        <taxon>Pentapetalae</taxon>
        <taxon>rosids</taxon>
        <taxon>malvids</taxon>
        <taxon>Brassicales</taxon>
        <taxon>Brassicaceae</taxon>
        <taxon>Camelineae</taxon>
        <taxon>Arabidopsis</taxon>
    </lineage>
</organism>
<feature type="signal peptide" evidence="2">
    <location>
        <begin position="1"/>
        <end position="22"/>
    </location>
</feature>
<feature type="chain" id="PRO_0000430068" description="EMBRYO SURROUNDING FACTOR 1-like protein 7">
    <location>
        <begin position="23"/>
        <end position="88"/>
    </location>
</feature>
<feature type="disulfide bond" evidence="1">
    <location>
        <begin position="41"/>
        <end position="57"/>
    </location>
</feature>
<feature type="disulfide bond" evidence="1">
    <location>
        <begin position="46"/>
        <end position="85"/>
    </location>
</feature>
<feature type="disulfide bond" evidence="1">
    <location>
        <begin position="55"/>
        <end position="81"/>
    </location>
</feature>
<feature type="disulfide bond" evidence="1">
    <location>
        <begin position="58"/>
        <end position="68"/>
    </location>
</feature>